<protein>
    <recommendedName>
        <fullName evidence="1">UDP-N-acetylglucosamine 1-carboxyvinyltransferase</fullName>
        <ecNumber evidence="1">2.5.1.7</ecNumber>
    </recommendedName>
    <alternativeName>
        <fullName evidence="1">Enoylpyruvate transferase</fullName>
    </alternativeName>
    <alternativeName>
        <fullName evidence="1">UDP-N-acetylglucosamine enolpyruvyl transferase</fullName>
        <shortName evidence="1">EPT</shortName>
    </alternativeName>
</protein>
<sequence>MEQLKIMGGRRLEGEVTISGAKNAVLPILAATLLVKGTTVIDNVPRLRDVNTLLAVLNEMGAKAHFTAENQVSVDASNITNPVAPYELVRTMRASVLVLGPLLARFGQAKVSLPGGCAIGARPVDQHIKGMRALGAEVDVCEGYIEAKASRLRGQTLTMDVVTVTGTENILMAAVLADGTTVLHNAALEPEVSDLAHCLNAMGAKIKGIGTSTLTIEGVESLHPCHYRTLPDRIETGTLLVAAAVTGGSIVARQTSPQLLEAVLEKLEAAGCSIRRGADFVALEAKKPLQAVSLRTAPFPAFPTDMQAQFMALNCVAHGSAAIVETIFENRFMHVPELSRMGARIFIEGNTVTTFGVEKLSGAPVMATDLRASACLVIAALAAEGETVISRIYHLDRGYEAMEVKLRGLGAQIERIQEA</sequence>
<name>MURA_DICNV</name>
<comment type="function">
    <text evidence="1">Cell wall formation. Adds enolpyruvyl to UDP-N-acetylglucosamine.</text>
</comment>
<comment type="catalytic activity">
    <reaction evidence="1">
        <text>phosphoenolpyruvate + UDP-N-acetyl-alpha-D-glucosamine = UDP-N-acetyl-3-O-(1-carboxyvinyl)-alpha-D-glucosamine + phosphate</text>
        <dbReference type="Rhea" id="RHEA:18681"/>
        <dbReference type="ChEBI" id="CHEBI:43474"/>
        <dbReference type="ChEBI" id="CHEBI:57705"/>
        <dbReference type="ChEBI" id="CHEBI:58702"/>
        <dbReference type="ChEBI" id="CHEBI:68483"/>
        <dbReference type="EC" id="2.5.1.7"/>
    </reaction>
</comment>
<comment type="pathway">
    <text evidence="1">Cell wall biogenesis; peptidoglycan biosynthesis.</text>
</comment>
<comment type="subcellular location">
    <subcellularLocation>
        <location evidence="1">Cytoplasm</location>
    </subcellularLocation>
</comment>
<comment type="similarity">
    <text evidence="1">Belongs to the EPSP synthase family. MurA subfamily.</text>
</comment>
<dbReference type="EC" id="2.5.1.7" evidence="1"/>
<dbReference type="EMBL" id="CP000513">
    <property type="protein sequence ID" value="ABQ13593.1"/>
    <property type="molecule type" value="Genomic_DNA"/>
</dbReference>
<dbReference type="RefSeq" id="WP_012031174.1">
    <property type="nucleotide sequence ID" value="NC_009446.1"/>
</dbReference>
<dbReference type="SMR" id="A5EYD6"/>
<dbReference type="STRING" id="246195.DNO_0853"/>
<dbReference type="KEGG" id="dno:DNO_0853"/>
<dbReference type="eggNOG" id="COG0766">
    <property type="taxonomic scope" value="Bacteria"/>
</dbReference>
<dbReference type="HOGENOM" id="CLU_027387_0_0_6"/>
<dbReference type="OrthoDB" id="9803760at2"/>
<dbReference type="UniPathway" id="UPA00219"/>
<dbReference type="Proteomes" id="UP000000248">
    <property type="component" value="Chromosome"/>
</dbReference>
<dbReference type="GO" id="GO:0005737">
    <property type="term" value="C:cytoplasm"/>
    <property type="evidence" value="ECO:0007669"/>
    <property type="project" value="UniProtKB-SubCell"/>
</dbReference>
<dbReference type="GO" id="GO:0008760">
    <property type="term" value="F:UDP-N-acetylglucosamine 1-carboxyvinyltransferase activity"/>
    <property type="evidence" value="ECO:0007669"/>
    <property type="project" value="UniProtKB-UniRule"/>
</dbReference>
<dbReference type="GO" id="GO:0051301">
    <property type="term" value="P:cell division"/>
    <property type="evidence" value="ECO:0007669"/>
    <property type="project" value="UniProtKB-KW"/>
</dbReference>
<dbReference type="GO" id="GO:0071555">
    <property type="term" value="P:cell wall organization"/>
    <property type="evidence" value="ECO:0007669"/>
    <property type="project" value="UniProtKB-KW"/>
</dbReference>
<dbReference type="GO" id="GO:0009252">
    <property type="term" value="P:peptidoglycan biosynthetic process"/>
    <property type="evidence" value="ECO:0007669"/>
    <property type="project" value="UniProtKB-UniRule"/>
</dbReference>
<dbReference type="GO" id="GO:0008360">
    <property type="term" value="P:regulation of cell shape"/>
    <property type="evidence" value="ECO:0007669"/>
    <property type="project" value="UniProtKB-KW"/>
</dbReference>
<dbReference type="GO" id="GO:0019277">
    <property type="term" value="P:UDP-N-acetylgalactosamine biosynthetic process"/>
    <property type="evidence" value="ECO:0007669"/>
    <property type="project" value="InterPro"/>
</dbReference>
<dbReference type="CDD" id="cd01555">
    <property type="entry name" value="UdpNAET"/>
    <property type="match status" value="1"/>
</dbReference>
<dbReference type="FunFam" id="3.65.10.10:FF:000001">
    <property type="entry name" value="UDP-N-acetylglucosamine 1-carboxyvinyltransferase"/>
    <property type="match status" value="1"/>
</dbReference>
<dbReference type="Gene3D" id="3.65.10.10">
    <property type="entry name" value="Enolpyruvate transferase domain"/>
    <property type="match status" value="2"/>
</dbReference>
<dbReference type="HAMAP" id="MF_00111">
    <property type="entry name" value="MurA"/>
    <property type="match status" value="1"/>
</dbReference>
<dbReference type="InterPro" id="IPR001986">
    <property type="entry name" value="Enolpyruvate_Tfrase_dom"/>
</dbReference>
<dbReference type="InterPro" id="IPR036968">
    <property type="entry name" value="Enolpyruvate_Tfrase_sf"/>
</dbReference>
<dbReference type="InterPro" id="IPR050068">
    <property type="entry name" value="MurA_subfamily"/>
</dbReference>
<dbReference type="InterPro" id="IPR013792">
    <property type="entry name" value="RNA3'P_cycl/enolpyr_Trfase_a/b"/>
</dbReference>
<dbReference type="InterPro" id="IPR005750">
    <property type="entry name" value="UDP_GlcNAc_COvinyl_MurA"/>
</dbReference>
<dbReference type="NCBIfam" id="TIGR01072">
    <property type="entry name" value="murA"/>
    <property type="match status" value="1"/>
</dbReference>
<dbReference type="NCBIfam" id="NF006873">
    <property type="entry name" value="PRK09369.1"/>
    <property type="match status" value="1"/>
</dbReference>
<dbReference type="PANTHER" id="PTHR43783">
    <property type="entry name" value="UDP-N-ACETYLGLUCOSAMINE 1-CARBOXYVINYLTRANSFERASE"/>
    <property type="match status" value="1"/>
</dbReference>
<dbReference type="PANTHER" id="PTHR43783:SF1">
    <property type="entry name" value="UDP-N-ACETYLGLUCOSAMINE 1-CARBOXYVINYLTRANSFERASE"/>
    <property type="match status" value="1"/>
</dbReference>
<dbReference type="Pfam" id="PF00275">
    <property type="entry name" value="EPSP_synthase"/>
    <property type="match status" value="1"/>
</dbReference>
<dbReference type="SUPFAM" id="SSF55205">
    <property type="entry name" value="EPT/RTPC-like"/>
    <property type="match status" value="1"/>
</dbReference>
<evidence type="ECO:0000255" key="1">
    <source>
        <dbReference type="HAMAP-Rule" id="MF_00111"/>
    </source>
</evidence>
<feature type="chain" id="PRO_1000023032" description="UDP-N-acetylglucosamine 1-carboxyvinyltransferase">
    <location>
        <begin position="1"/>
        <end position="419"/>
    </location>
</feature>
<feature type="active site" description="Proton donor" evidence="1">
    <location>
        <position position="117"/>
    </location>
</feature>
<feature type="binding site" evidence="1">
    <location>
        <begin position="22"/>
        <end position="23"/>
    </location>
    <ligand>
        <name>phosphoenolpyruvate</name>
        <dbReference type="ChEBI" id="CHEBI:58702"/>
    </ligand>
</feature>
<feature type="binding site" evidence="1">
    <location>
        <position position="93"/>
    </location>
    <ligand>
        <name>UDP-N-acetyl-alpha-D-glucosamine</name>
        <dbReference type="ChEBI" id="CHEBI:57705"/>
    </ligand>
</feature>
<feature type="binding site" evidence="1">
    <location>
        <begin position="122"/>
        <end position="126"/>
    </location>
    <ligand>
        <name>UDP-N-acetyl-alpha-D-glucosamine</name>
        <dbReference type="ChEBI" id="CHEBI:57705"/>
    </ligand>
</feature>
<feature type="binding site" evidence="1">
    <location>
        <position position="305"/>
    </location>
    <ligand>
        <name>UDP-N-acetyl-alpha-D-glucosamine</name>
        <dbReference type="ChEBI" id="CHEBI:57705"/>
    </ligand>
</feature>
<feature type="binding site" evidence="1">
    <location>
        <position position="327"/>
    </location>
    <ligand>
        <name>UDP-N-acetyl-alpha-D-glucosamine</name>
        <dbReference type="ChEBI" id="CHEBI:57705"/>
    </ligand>
</feature>
<feature type="modified residue" description="2-(S-cysteinyl)pyruvic acid O-phosphothioketal" evidence="1">
    <location>
        <position position="117"/>
    </location>
</feature>
<gene>
    <name evidence="1" type="primary">murA</name>
    <name type="ordered locus">DNO_0853</name>
</gene>
<keyword id="KW-0131">Cell cycle</keyword>
<keyword id="KW-0132">Cell division</keyword>
<keyword id="KW-0133">Cell shape</keyword>
<keyword id="KW-0961">Cell wall biogenesis/degradation</keyword>
<keyword id="KW-0963">Cytoplasm</keyword>
<keyword id="KW-0573">Peptidoglycan synthesis</keyword>
<keyword id="KW-0670">Pyruvate</keyword>
<keyword id="KW-1185">Reference proteome</keyword>
<keyword id="KW-0808">Transferase</keyword>
<proteinExistence type="inferred from homology"/>
<reference key="1">
    <citation type="journal article" date="2007" name="Nat. Biotechnol.">
        <title>Genome sequence and identification of candidate vaccine antigens from the animal pathogen Dichelobacter nodosus.</title>
        <authorList>
            <person name="Myers G.S.A."/>
            <person name="Parker D."/>
            <person name="Al-Hasani K."/>
            <person name="Kennan R.M."/>
            <person name="Seemann T."/>
            <person name="Ren Q."/>
            <person name="Badger J.H."/>
            <person name="Selengut J.D."/>
            <person name="Deboy R.T."/>
            <person name="Tettelin H."/>
            <person name="Boyce J.D."/>
            <person name="McCarl V.P."/>
            <person name="Han X."/>
            <person name="Nelson W.C."/>
            <person name="Madupu R."/>
            <person name="Mohamoud Y."/>
            <person name="Holley T."/>
            <person name="Fedorova N."/>
            <person name="Khouri H."/>
            <person name="Bottomley S.P."/>
            <person name="Whittington R.J."/>
            <person name="Adler B."/>
            <person name="Songer J.G."/>
            <person name="Rood J.I."/>
            <person name="Paulsen I.T."/>
        </authorList>
    </citation>
    <scope>NUCLEOTIDE SEQUENCE [LARGE SCALE GENOMIC DNA]</scope>
    <source>
        <strain>VCS1703A</strain>
    </source>
</reference>
<accession>A5EYD6</accession>
<organism>
    <name type="scientific">Dichelobacter nodosus (strain VCS1703A)</name>
    <dbReference type="NCBI Taxonomy" id="246195"/>
    <lineage>
        <taxon>Bacteria</taxon>
        <taxon>Pseudomonadati</taxon>
        <taxon>Pseudomonadota</taxon>
        <taxon>Gammaproteobacteria</taxon>
        <taxon>Cardiobacteriales</taxon>
        <taxon>Cardiobacteriaceae</taxon>
        <taxon>Dichelobacter</taxon>
    </lineage>
</organism>